<accession>Q7V2Y0</accession>
<sequence length="106" mass="12164">MMTLRDLINKLLGRETASANTARERLQLVLAHDRVDMSSLTTDLLDKMRKEILDVVAKYVEIDFEEVAVSLETEDRMTALVANLPIKRTLTGEIEFKKNEDTQKKK</sequence>
<proteinExistence type="inferred from homology"/>
<name>MINE_PROMP</name>
<reference key="1">
    <citation type="journal article" date="2003" name="Nature">
        <title>Genome divergence in two Prochlorococcus ecotypes reflects oceanic niche differentiation.</title>
        <authorList>
            <person name="Rocap G."/>
            <person name="Larimer F.W."/>
            <person name="Lamerdin J.E."/>
            <person name="Malfatti S."/>
            <person name="Chain P."/>
            <person name="Ahlgren N.A."/>
            <person name="Arellano A."/>
            <person name="Coleman M."/>
            <person name="Hauser L."/>
            <person name="Hess W.R."/>
            <person name="Johnson Z.I."/>
            <person name="Land M.L."/>
            <person name="Lindell D."/>
            <person name="Post A.F."/>
            <person name="Regala W."/>
            <person name="Shah M."/>
            <person name="Shaw S.L."/>
            <person name="Steglich C."/>
            <person name="Sullivan M.B."/>
            <person name="Ting C.S."/>
            <person name="Tolonen A."/>
            <person name="Webb E.A."/>
            <person name="Zinser E.R."/>
            <person name="Chisholm S.W."/>
        </authorList>
    </citation>
    <scope>NUCLEOTIDE SEQUENCE [LARGE SCALE GENOMIC DNA]</scope>
    <source>
        <strain>CCMP1986 / NIES-2087 / MED4</strain>
    </source>
</reference>
<protein>
    <recommendedName>
        <fullName evidence="1">Cell division topological specificity factor</fullName>
    </recommendedName>
</protein>
<feature type="chain" id="PRO_0000298156" description="Cell division topological specificity factor">
    <location>
        <begin position="1"/>
        <end position="106"/>
    </location>
</feature>
<keyword id="KW-0131">Cell cycle</keyword>
<keyword id="KW-0132">Cell division</keyword>
<organism>
    <name type="scientific">Prochlorococcus marinus subsp. pastoris (strain CCMP1986 / NIES-2087 / MED4)</name>
    <dbReference type="NCBI Taxonomy" id="59919"/>
    <lineage>
        <taxon>Bacteria</taxon>
        <taxon>Bacillati</taxon>
        <taxon>Cyanobacteriota</taxon>
        <taxon>Cyanophyceae</taxon>
        <taxon>Synechococcales</taxon>
        <taxon>Prochlorococcaceae</taxon>
        <taxon>Prochlorococcus</taxon>
    </lineage>
</organism>
<comment type="function">
    <text evidence="1">Prevents the cell division inhibition by proteins MinC and MinD at internal division sites while permitting inhibition at polar sites. This ensures cell division at the proper site by restricting the formation of a division septum at the midpoint of the long axis of the cell.</text>
</comment>
<comment type="similarity">
    <text evidence="1">Belongs to the MinE family.</text>
</comment>
<gene>
    <name evidence="1" type="primary">minE</name>
    <name type="ordered locus">PMM0320</name>
</gene>
<evidence type="ECO:0000255" key="1">
    <source>
        <dbReference type="HAMAP-Rule" id="MF_00262"/>
    </source>
</evidence>
<dbReference type="EMBL" id="BX548174">
    <property type="protein sequence ID" value="CAE18779.1"/>
    <property type="molecule type" value="Genomic_DNA"/>
</dbReference>
<dbReference type="RefSeq" id="WP_011131957.1">
    <property type="nucleotide sequence ID" value="NC_005072.1"/>
</dbReference>
<dbReference type="SMR" id="Q7V2Y0"/>
<dbReference type="STRING" id="59919.PMM0320"/>
<dbReference type="KEGG" id="pmm:PMM0320"/>
<dbReference type="eggNOG" id="COG0851">
    <property type="taxonomic scope" value="Bacteria"/>
</dbReference>
<dbReference type="HOGENOM" id="CLU_137929_1_1_3"/>
<dbReference type="Proteomes" id="UP000001026">
    <property type="component" value="Chromosome"/>
</dbReference>
<dbReference type="GO" id="GO:0051301">
    <property type="term" value="P:cell division"/>
    <property type="evidence" value="ECO:0007669"/>
    <property type="project" value="UniProtKB-KW"/>
</dbReference>
<dbReference type="GO" id="GO:0032955">
    <property type="term" value="P:regulation of division septum assembly"/>
    <property type="evidence" value="ECO:0007669"/>
    <property type="project" value="InterPro"/>
</dbReference>
<dbReference type="Gene3D" id="3.30.1070.10">
    <property type="entry name" value="Cell division topological specificity factor MinE"/>
    <property type="match status" value="1"/>
</dbReference>
<dbReference type="HAMAP" id="MF_00262">
    <property type="entry name" value="MinE"/>
    <property type="match status" value="1"/>
</dbReference>
<dbReference type="InterPro" id="IPR005527">
    <property type="entry name" value="MinE"/>
</dbReference>
<dbReference type="InterPro" id="IPR036707">
    <property type="entry name" value="MinE_sf"/>
</dbReference>
<dbReference type="NCBIfam" id="TIGR01215">
    <property type="entry name" value="minE"/>
    <property type="match status" value="1"/>
</dbReference>
<dbReference type="NCBIfam" id="NF001422">
    <property type="entry name" value="PRK00296.1"/>
    <property type="match status" value="1"/>
</dbReference>
<dbReference type="Pfam" id="PF03776">
    <property type="entry name" value="MinE"/>
    <property type="match status" value="1"/>
</dbReference>
<dbReference type="SUPFAM" id="SSF55229">
    <property type="entry name" value="Cell division protein MinE topological specificity domain"/>
    <property type="match status" value="1"/>
</dbReference>